<dbReference type="EMBL" id="CP000393">
    <property type="protein sequence ID" value="ABG51138.1"/>
    <property type="molecule type" value="Genomic_DNA"/>
</dbReference>
<dbReference type="RefSeq" id="WP_011611511.1">
    <property type="nucleotide sequence ID" value="NC_008312.1"/>
</dbReference>
<dbReference type="SMR" id="Q114D6"/>
<dbReference type="STRING" id="203124.Tery_1882"/>
<dbReference type="KEGG" id="ter:Tery_1882"/>
<dbReference type="eggNOG" id="COG0292">
    <property type="taxonomic scope" value="Bacteria"/>
</dbReference>
<dbReference type="HOGENOM" id="CLU_123265_0_1_3"/>
<dbReference type="OrthoDB" id="9808966at2"/>
<dbReference type="GO" id="GO:1990904">
    <property type="term" value="C:ribonucleoprotein complex"/>
    <property type="evidence" value="ECO:0007669"/>
    <property type="project" value="UniProtKB-KW"/>
</dbReference>
<dbReference type="GO" id="GO:0005840">
    <property type="term" value="C:ribosome"/>
    <property type="evidence" value="ECO:0007669"/>
    <property type="project" value="UniProtKB-KW"/>
</dbReference>
<dbReference type="GO" id="GO:0019843">
    <property type="term" value="F:rRNA binding"/>
    <property type="evidence" value="ECO:0007669"/>
    <property type="project" value="UniProtKB-UniRule"/>
</dbReference>
<dbReference type="GO" id="GO:0003735">
    <property type="term" value="F:structural constituent of ribosome"/>
    <property type="evidence" value="ECO:0007669"/>
    <property type="project" value="InterPro"/>
</dbReference>
<dbReference type="GO" id="GO:0000027">
    <property type="term" value="P:ribosomal large subunit assembly"/>
    <property type="evidence" value="ECO:0007669"/>
    <property type="project" value="UniProtKB-UniRule"/>
</dbReference>
<dbReference type="GO" id="GO:0006412">
    <property type="term" value="P:translation"/>
    <property type="evidence" value="ECO:0007669"/>
    <property type="project" value="InterPro"/>
</dbReference>
<dbReference type="CDD" id="cd07026">
    <property type="entry name" value="Ribosomal_L20"/>
    <property type="match status" value="1"/>
</dbReference>
<dbReference type="FunFam" id="1.10.1900.20:FF:000001">
    <property type="entry name" value="50S ribosomal protein L20"/>
    <property type="match status" value="1"/>
</dbReference>
<dbReference type="Gene3D" id="6.10.160.10">
    <property type="match status" value="1"/>
</dbReference>
<dbReference type="Gene3D" id="1.10.1900.20">
    <property type="entry name" value="Ribosomal protein L20"/>
    <property type="match status" value="1"/>
</dbReference>
<dbReference type="HAMAP" id="MF_00382">
    <property type="entry name" value="Ribosomal_bL20"/>
    <property type="match status" value="1"/>
</dbReference>
<dbReference type="InterPro" id="IPR005813">
    <property type="entry name" value="Ribosomal_bL20"/>
</dbReference>
<dbReference type="InterPro" id="IPR049946">
    <property type="entry name" value="RIBOSOMAL_L20_CS"/>
</dbReference>
<dbReference type="InterPro" id="IPR035566">
    <property type="entry name" value="Ribosomal_protein_bL20_C"/>
</dbReference>
<dbReference type="NCBIfam" id="TIGR01032">
    <property type="entry name" value="rplT_bact"/>
    <property type="match status" value="1"/>
</dbReference>
<dbReference type="PANTHER" id="PTHR10986">
    <property type="entry name" value="39S RIBOSOMAL PROTEIN L20"/>
    <property type="match status" value="1"/>
</dbReference>
<dbReference type="Pfam" id="PF00453">
    <property type="entry name" value="Ribosomal_L20"/>
    <property type="match status" value="1"/>
</dbReference>
<dbReference type="PRINTS" id="PR00062">
    <property type="entry name" value="RIBOSOMALL20"/>
</dbReference>
<dbReference type="SUPFAM" id="SSF74731">
    <property type="entry name" value="Ribosomal protein L20"/>
    <property type="match status" value="1"/>
</dbReference>
<dbReference type="PROSITE" id="PS00937">
    <property type="entry name" value="RIBOSOMAL_L20"/>
    <property type="match status" value="1"/>
</dbReference>
<comment type="function">
    <text evidence="1">Binds directly to 23S ribosomal RNA and is necessary for the in vitro assembly process of the 50S ribosomal subunit. It is not involved in the protein synthesizing functions of that subunit.</text>
</comment>
<comment type="similarity">
    <text evidence="1">Belongs to the bacterial ribosomal protein bL20 family.</text>
</comment>
<protein>
    <recommendedName>
        <fullName evidence="1">Large ribosomal subunit protein bL20</fullName>
    </recommendedName>
    <alternativeName>
        <fullName evidence="2">50S ribosomal protein L20</fullName>
    </alternativeName>
</protein>
<accession>Q114D6</accession>
<gene>
    <name evidence="1" type="primary">rplT</name>
    <name evidence="1" type="synonym">rpl20</name>
    <name type="ordered locus">Tery_1882</name>
</gene>
<feature type="chain" id="PRO_1000049098" description="Large ribosomal subunit protein bL20">
    <location>
        <begin position="1"/>
        <end position="118"/>
    </location>
</feature>
<keyword id="KW-0687">Ribonucleoprotein</keyword>
<keyword id="KW-0689">Ribosomal protein</keyword>
<keyword id="KW-0694">RNA-binding</keyword>
<keyword id="KW-0699">rRNA-binding</keyword>
<name>RL20_TRIEI</name>
<sequence>MPRVKRGNVARKRRKKILKLAKGFRGAQSRLFKVANQRVMQALRNAYRDRRKRKRDFRRLWITRINAAARQQGMTYSQLICNMKRANIAINRKMLAQLAVLNPEAFAKVLELASLAKK</sequence>
<proteinExistence type="inferred from homology"/>
<evidence type="ECO:0000255" key="1">
    <source>
        <dbReference type="HAMAP-Rule" id="MF_00382"/>
    </source>
</evidence>
<evidence type="ECO:0000305" key="2"/>
<organism>
    <name type="scientific">Trichodesmium erythraeum (strain IMS101)</name>
    <dbReference type="NCBI Taxonomy" id="203124"/>
    <lineage>
        <taxon>Bacteria</taxon>
        <taxon>Bacillati</taxon>
        <taxon>Cyanobacteriota</taxon>
        <taxon>Cyanophyceae</taxon>
        <taxon>Oscillatoriophycideae</taxon>
        <taxon>Oscillatoriales</taxon>
        <taxon>Microcoleaceae</taxon>
        <taxon>Trichodesmium</taxon>
    </lineage>
</organism>
<reference key="1">
    <citation type="journal article" date="2015" name="Proc. Natl. Acad. Sci. U.S.A.">
        <title>Trichodesmium genome maintains abundant, widespread noncoding DNA in situ, despite oligotrophic lifestyle.</title>
        <authorList>
            <person name="Walworth N."/>
            <person name="Pfreundt U."/>
            <person name="Nelson W.C."/>
            <person name="Mincer T."/>
            <person name="Heidelberg J.F."/>
            <person name="Fu F."/>
            <person name="Waterbury J.B."/>
            <person name="Glavina del Rio T."/>
            <person name="Goodwin L."/>
            <person name="Kyrpides N.C."/>
            <person name="Land M.L."/>
            <person name="Woyke T."/>
            <person name="Hutchins D.A."/>
            <person name="Hess W.R."/>
            <person name="Webb E.A."/>
        </authorList>
    </citation>
    <scope>NUCLEOTIDE SEQUENCE [LARGE SCALE GENOMIC DNA]</scope>
    <source>
        <strain>IMS101</strain>
    </source>
</reference>